<protein>
    <recommendedName>
        <fullName evidence="7">PTS system N-acetylmuramic acid-specific EIIBC component</fullName>
    </recommendedName>
    <alternativeName>
        <fullName evidence="7">EIIBC-MurNAc</fullName>
    </alternativeName>
    <domain>
        <recommendedName>
            <fullName evidence="7">N-acetylmuramic acid-specific phosphotransferase enzyme IIB component</fullName>
            <ecNumber evidence="4">2.7.1.192</ecNumber>
        </recommendedName>
        <alternativeName>
            <fullName evidence="7">PTS system N-acetylmuramic acid-specific EIIB component</fullName>
        </alternativeName>
    </domain>
    <domain>
        <recommendedName>
            <fullName evidence="7">N-acetylmuramic acid permease IIC component</fullName>
        </recommendedName>
        <alternativeName>
            <fullName evidence="7">PTS system N-acetylmuramic acid-specific EIIC component</fullName>
        </alternativeName>
    </domain>
</protein>
<feature type="chain" id="PRO_0000186709" description="PTS system N-acetylmuramic acid-specific EIIBC component">
    <location>
        <begin position="1"/>
        <end position="474"/>
    </location>
</feature>
<feature type="topological domain" description="Cytoplasmic" evidence="1">
    <location>
        <begin position="1"/>
        <end position="123"/>
    </location>
</feature>
<feature type="transmembrane region" description="Helical" evidence="3">
    <location>
        <begin position="124"/>
        <end position="144"/>
    </location>
</feature>
<feature type="topological domain" description="Periplasmic" evidence="1">
    <location>
        <begin position="145"/>
        <end position="157"/>
    </location>
</feature>
<feature type="transmembrane region" description="Helical" evidence="3">
    <location>
        <begin position="158"/>
        <end position="178"/>
    </location>
</feature>
<feature type="topological domain" description="Cytoplasmic" evidence="1">
    <location>
        <begin position="179"/>
        <end position="180"/>
    </location>
</feature>
<feature type="transmembrane region" description="Helical" evidence="3">
    <location>
        <begin position="181"/>
        <end position="201"/>
    </location>
</feature>
<feature type="topological domain" description="Periplasmic" evidence="1">
    <location>
        <begin position="202"/>
        <end position="217"/>
    </location>
</feature>
<feature type="transmembrane region" description="Helical" evidence="3">
    <location>
        <begin position="218"/>
        <end position="238"/>
    </location>
</feature>
<feature type="topological domain" description="Cytoplasmic" evidence="1">
    <location>
        <begin position="239"/>
        <end position="260"/>
    </location>
</feature>
<feature type="transmembrane region" description="Helical" evidence="3">
    <location>
        <begin position="261"/>
        <end position="281"/>
    </location>
</feature>
<feature type="topological domain" description="Periplasmic" evidence="1">
    <location>
        <begin position="282"/>
        <end position="301"/>
    </location>
</feature>
<feature type="transmembrane region" description="Helical" evidence="3">
    <location>
        <begin position="302"/>
        <end position="322"/>
    </location>
</feature>
<feature type="topological domain" description="Cytoplasmic" evidence="1">
    <location>
        <begin position="323"/>
        <end position="334"/>
    </location>
</feature>
<feature type="transmembrane region" description="Helical" evidence="3">
    <location>
        <begin position="335"/>
        <end position="355"/>
    </location>
</feature>
<feature type="topological domain" description="Periplasmic" evidence="1">
    <location>
        <begin position="356"/>
        <end position="368"/>
    </location>
</feature>
<feature type="transmembrane region" description="Helical" evidence="3">
    <location>
        <begin position="369"/>
        <end position="389"/>
    </location>
</feature>
<feature type="topological domain" description="Cytoplasmic" evidence="1">
    <location>
        <begin position="390"/>
        <end position="393"/>
    </location>
</feature>
<feature type="transmembrane region" description="Helical" evidence="3">
    <location>
        <begin position="394"/>
        <end position="414"/>
    </location>
</feature>
<feature type="topological domain" description="Periplasmic" evidence="1">
    <location>
        <begin position="415"/>
        <end position="440"/>
    </location>
</feature>
<feature type="transmembrane region" description="Helical" evidence="3">
    <location>
        <begin position="441"/>
        <end position="461"/>
    </location>
</feature>
<feature type="topological domain" description="Cytoplasmic" evidence="1">
    <location>
        <begin position="462"/>
        <end position="474"/>
    </location>
</feature>
<feature type="domain" description="PTS EIIB type-1" evidence="2">
    <location>
        <begin position="1"/>
        <end position="89"/>
    </location>
</feature>
<feature type="domain" description="PTS EIIC type-1" evidence="3">
    <location>
        <begin position="115"/>
        <end position="474"/>
    </location>
</feature>
<feature type="active site" description="Phosphocysteine intermediate; for EIIB activity" evidence="2">
    <location>
        <position position="29"/>
    </location>
</feature>
<sequence length="474" mass="49802">MAKEISSELLNTILTRVGGPGNIASCGNCMTRLRLGVHDSSLVDPNIKTLEGVKGVILTSDQVQVVFGPGKAHRAAKAMSELLGEAPVQDAAEIAAQNKRQLKAKQTSGVQQFLAKFATIFTPLIPGFIAAGLLLGIATLIATVMHVPADAQGTLPDALNFMKVFSKGLFTFLVILVGYNAAQAFGGTGVNGAIIAALFLLGYNPAATTGYYAGFHDFFGLPIDPRGNIIGVLIAAWACARIEGMVRRFMPDDLDMLLTSLITLLITATLAYLIIMPLGGWLFEGMSWLFMHLNSNPFGCAVLAGLFLIAVVFGVHQGFIPVYLALMDSQGFNSLFPILSMAGAGQVGAALALYWRAQPHSALRSQVRGAIIPGLLGVGEPLIYGVTLPRMKPFVTACLGGAAGGLFIGLIAWWGLPMGLNSAFGPSGLVALPLMTSAQGILPAMAVYAGGILVAWVCGFIFTTLFGCRNVNLD</sequence>
<proteinExistence type="evidence at protein level"/>
<dbReference type="EC" id="2.7.1.192" evidence="4"/>
<dbReference type="EMBL" id="U00096">
    <property type="protein sequence ID" value="AAC75482.1"/>
    <property type="molecule type" value="Genomic_DNA"/>
</dbReference>
<dbReference type="EMBL" id="AP009048">
    <property type="protein sequence ID" value="BAA16313.1"/>
    <property type="molecule type" value="Genomic_DNA"/>
</dbReference>
<dbReference type="PIR" id="D65017">
    <property type="entry name" value="D65017"/>
</dbReference>
<dbReference type="RefSeq" id="NP_416924.1">
    <property type="nucleotide sequence ID" value="NC_000913.3"/>
</dbReference>
<dbReference type="RefSeq" id="WP_001040483.1">
    <property type="nucleotide sequence ID" value="NZ_JACEFS010000004.1"/>
</dbReference>
<dbReference type="SMR" id="P77272"/>
<dbReference type="BioGRID" id="4260573">
    <property type="interactions" value="11"/>
</dbReference>
<dbReference type="FunCoup" id="P77272">
    <property type="interactions" value="93"/>
</dbReference>
<dbReference type="STRING" id="511145.b2429"/>
<dbReference type="TCDB" id="4.A.1.2.7">
    <property type="family name" value="the pts glucose-glucoside (glc) family"/>
</dbReference>
<dbReference type="PaxDb" id="511145-b2429"/>
<dbReference type="EnsemblBacteria" id="AAC75482">
    <property type="protein sequence ID" value="AAC75482"/>
    <property type="gene ID" value="b2429"/>
</dbReference>
<dbReference type="GeneID" id="946894"/>
<dbReference type="KEGG" id="ecj:JW2422"/>
<dbReference type="KEGG" id="eco:b2429"/>
<dbReference type="KEGG" id="ecoc:C3026_13495"/>
<dbReference type="PATRIC" id="fig|1411691.4.peg.4302"/>
<dbReference type="EchoBASE" id="EB3915"/>
<dbReference type="eggNOG" id="COG1263">
    <property type="taxonomic scope" value="Bacteria"/>
</dbReference>
<dbReference type="eggNOG" id="COG1264">
    <property type="taxonomic scope" value="Bacteria"/>
</dbReference>
<dbReference type="HOGENOM" id="CLU_012312_2_0_6"/>
<dbReference type="InParanoid" id="P77272"/>
<dbReference type="OMA" id="SITNCMT"/>
<dbReference type="OrthoDB" id="9797715at2"/>
<dbReference type="PhylomeDB" id="P77272"/>
<dbReference type="BioCyc" id="EcoCyc:MONOMER0-5"/>
<dbReference type="BioCyc" id="MetaCyc:MONOMER0-5"/>
<dbReference type="BRENDA" id="2.7.1.192">
    <property type="organism ID" value="2026"/>
</dbReference>
<dbReference type="PRO" id="PR:P77272"/>
<dbReference type="Proteomes" id="UP000000625">
    <property type="component" value="Chromosome"/>
</dbReference>
<dbReference type="GO" id="GO:0016020">
    <property type="term" value="C:membrane"/>
    <property type="evidence" value="ECO:0000314"/>
    <property type="project" value="EcoCyc"/>
</dbReference>
<dbReference type="GO" id="GO:0005886">
    <property type="term" value="C:plasma membrane"/>
    <property type="evidence" value="ECO:0000314"/>
    <property type="project" value="EcoCyc"/>
</dbReference>
<dbReference type="GO" id="GO:0016301">
    <property type="term" value="F:kinase activity"/>
    <property type="evidence" value="ECO:0007669"/>
    <property type="project" value="UniProtKB-KW"/>
</dbReference>
<dbReference type="GO" id="GO:0008982">
    <property type="term" value="F:protein-N(PI)-phosphohistidine-sugar phosphotransferase activity"/>
    <property type="evidence" value="ECO:0007669"/>
    <property type="project" value="InterPro"/>
</dbReference>
<dbReference type="GO" id="GO:0090588">
    <property type="term" value="F:protein-phosphocysteine-N-acetylmuramate phosphotransferase system transporter activity"/>
    <property type="evidence" value="ECO:0000315"/>
    <property type="project" value="EcoCyc"/>
</dbReference>
<dbReference type="GO" id="GO:0034219">
    <property type="term" value="P:carbohydrate transmembrane transport"/>
    <property type="evidence" value="ECO:0000315"/>
    <property type="project" value="EcoCyc"/>
</dbReference>
<dbReference type="GO" id="GO:0009401">
    <property type="term" value="P:phosphoenolpyruvate-dependent sugar phosphotransferase system"/>
    <property type="evidence" value="ECO:0000315"/>
    <property type="project" value="EcoCyc"/>
</dbReference>
<dbReference type="CDD" id="cd00212">
    <property type="entry name" value="PTS_IIB_glc"/>
    <property type="match status" value="1"/>
</dbReference>
<dbReference type="FunFam" id="3.30.1360.60:FF:000001">
    <property type="entry name" value="PTS system glucose-specific IIBC component PtsG"/>
    <property type="match status" value="1"/>
</dbReference>
<dbReference type="Gene3D" id="3.30.1360.60">
    <property type="entry name" value="Glucose permease domain IIB"/>
    <property type="match status" value="1"/>
</dbReference>
<dbReference type="InterPro" id="IPR036878">
    <property type="entry name" value="Glu_permease_IIB"/>
</dbReference>
<dbReference type="InterPro" id="IPR018113">
    <property type="entry name" value="PTrfase_EIIB_Cys"/>
</dbReference>
<dbReference type="InterPro" id="IPR003352">
    <property type="entry name" value="PTS_EIIC"/>
</dbReference>
<dbReference type="InterPro" id="IPR013013">
    <property type="entry name" value="PTS_EIIC_1"/>
</dbReference>
<dbReference type="InterPro" id="IPR001996">
    <property type="entry name" value="PTS_IIB_1"/>
</dbReference>
<dbReference type="InterPro" id="IPR050558">
    <property type="entry name" value="PTS_Sugar-Specific_Components"/>
</dbReference>
<dbReference type="NCBIfam" id="NF007152">
    <property type="entry name" value="PRK09586.1"/>
    <property type="match status" value="1"/>
</dbReference>
<dbReference type="PANTHER" id="PTHR30175">
    <property type="entry name" value="PHOSPHOTRANSFERASE SYSTEM TRANSPORT PROTEIN"/>
    <property type="match status" value="1"/>
</dbReference>
<dbReference type="PANTHER" id="PTHR30175:SF3">
    <property type="entry name" value="PTS SYSTEM N-ACETYLMURAMIC ACID-SPECIFIC EIIBC COMPONENT"/>
    <property type="match status" value="1"/>
</dbReference>
<dbReference type="Pfam" id="PF00367">
    <property type="entry name" value="PTS_EIIB"/>
    <property type="match status" value="1"/>
</dbReference>
<dbReference type="Pfam" id="PF02378">
    <property type="entry name" value="PTS_EIIC"/>
    <property type="match status" value="1"/>
</dbReference>
<dbReference type="SUPFAM" id="SSF55604">
    <property type="entry name" value="Glucose permease domain IIB"/>
    <property type="match status" value="1"/>
</dbReference>
<dbReference type="PROSITE" id="PS51098">
    <property type="entry name" value="PTS_EIIB_TYPE_1"/>
    <property type="match status" value="1"/>
</dbReference>
<dbReference type="PROSITE" id="PS01035">
    <property type="entry name" value="PTS_EIIB_TYPE_1_CYS"/>
    <property type="match status" value="1"/>
</dbReference>
<dbReference type="PROSITE" id="PS51103">
    <property type="entry name" value="PTS_EIIC_TYPE_1"/>
    <property type="match status" value="1"/>
</dbReference>
<keyword id="KW-0997">Cell inner membrane</keyword>
<keyword id="KW-1003">Cell membrane</keyword>
<keyword id="KW-0418">Kinase</keyword>
<keyword id="KW-0472">Membrane</keyword>
<keyword id="KW-0598">Phosphotransferase system</keyword>
<keyword id="KW-1185">Reference proteome</keyword>
<keyword id="KW-0762">Sugar transport</keyword>
<keyword id="KW-0808">Transferase</keyword>
<keyword id="KW-0812">Transmembrane</keyword>
<keyword id="KW-1133">Transmembrane helix</keyword>
<keyword id="KW-0813">Transport</keyword>
<comment type="function">
    <text evidence="4 5">The phosphoenolpyruvate-dependent sugar phosphotransferase system (sugar PTS), a major carbohydrate active transport system, catalyzes the phosphorylation of incoming sugar substrates concomitantly with their translocation across the cell membrane. This system is involved in N-acetylmuramic acid (MurNAc) transport, yielding cytoplasmic MurNAc-6-P. Is responsible for growth on MurNAc as the sole source of carbon and energy. Is also able to take up anhydro-N-acetylmuramic acid (anhMurNAc), but cannot phosphorylate the carbon 6, probably because of the 1,6-anhydro ring.</text>
</comment>
<comment type="catalytic activity">
    <reaction evidence="4">
        <text>N-acetyl-beta-D-muramate(out) + N(pros)-phospho-L-histidyl-[protein] = N-acetyl-beta-D-muramate 6-phosphate(in) + L-histidyl-[protein]</text>
        <dbReference type="Rhea" id="RHEA:33399"/>
        <dbReference type="Rhea" id="RHEA-COMP:9745"/>
        <dbReference type="Rhea" id="RHEA-COMP:9746"/>
        <dbReference type="ChEBI" id="CHEBI:29979"/>
        <dbReference type="ChEBI" id="CHEBI:58721"/>
        <dbReference type="ChEBI" id="CHEBI:64837"/>
        <dbReference type="ChEBI" id="CHEBI:64848"/>
        <dbReference type="EC" id="2.7.1.192"/>
    </reaction>
</comment>
<comment type="subcellular location">
    <subcellularLocation>
        <location evidence="3">Cell inner membrane</location>
        <topology evidence="3">Multi-pass membrane protein</topology>
    </subcellularLocation>
</comment>
<comment type="induction">
    <text evidence="6">Induced by MurNAc 6-phosphate that releases the repressor MurR from the DNA. Also up-regulated by the cAMP receptor protein crp via the binding of crp-cAMP to a class I site upstream of the murQ promoter. Repressed by MurR in the absence of MurNAc 6-phosphate.</text>
</comment>
<comment type="domain">
    <text evidence="2">The EIIB domain is phosphorylated by phospho-EIIA on a cysteinyl or histidyl residue, depending on the transported sugar. Then, it transfers the phosphoryl group to the sugar substrate concomitantly with the sugar uptake processed by the EIIC domain.</text>
</comment>
<comment type="domain">
    <text evidence="3">The EIIC domain forms the PTS system translocation channel and contains the specific substrate-binding site.</text>
</comment>
<comment type="miscellaneous">
    <text>The PTS domain EIIA required for activity was shown to be the crr-encoded enzyme IIA-glucose, EIIA-Glc.</text>
</comment>
<organism>
    <name type="scientific">Escherichia coli (strain K12)</name>
    <dbReference type="NCBI Taxonomy" id="83333"/>
    <lineage>
        <taxon>Bacteria</taxon>
        <taxon>Pseudomonadati</taxon>
        <taxon>Pseudomonadota</taxon>
        <taxon>Gammaproteobacteria</taxon>
        <taxon>Enterobacterales</taxon>
        <taxon>Enterobacteriaceae</taxon>
        <taxon>Escherichia</taxon>
    </lineage>
</organism>
<accession>P77272</accession>
<reference key="1">
    <citation type="journal article" date="1997" name="DNA Res.">
        <title>Construction of a contiguous 874-kb sequence of the Escherichia coli-K12 genome corresponding to 50.0-68.8 min on the linkage map and analysis of its sequence features.</title>
        <authorList>
            <person name="Yamamoto Y."/>
            <person name="Aiba H."/>
            <person name="Baba T."/>
            <person name="Hayashi K."/>
            <person name="Inada T."/>
            <person name="Isono K."/>
            <person name="Itoh T."/>
            <person name="Kimura S."/>
            <person name="Kitagawa M."/>
            <person name="Makino K."/>
            <person name="Miki T."/>
            <person name="Mitsuhashi N."/>
            <person name="Mizobuchi K."/>
            <person name="Mori H."/>
            <person name="Nakade S."/>
            <person name="Nakamura Y."/>
            <person name="Nashimoto H."/>
            <person name="Oshima T."/>
            <person name="Oyama S."/>
            <person name="Saito N."/>
            <person name="Sampei G."/>
            <person name="Satoh Y."/>
            <person name="Sivasundaram S."/>
            <person name="Tagami H."/>
            <person name="Takahashi H."/>
            <person name="Takeda J."/>
            <person name="Takemoto K."/>
            <person name="Uehara K."/>
            <person name="Wada C."/>
            <person name="Yamagata S."/>
            <person name="Horiuchi T."/>
        </authorList>
    </citation>
    <scope>NUCLEOTIDE SEQUENCE [LARGE SCALE GENOMIC DNA]</scope>
    <source>
        <strain>K12 / W3110 / ATCC 27325 / DSM 5911</strain>
    </source>
</reference>
<reference key="2">
    <citation type="journal article" date="1997" name="Science">
        <title>The complete genome sequence of Escherichia coli K-12.</title>
        <authorList>
            <person name="Blattner F.R."/>
            <person name="Plunkett G. III"/>
            <person name="Bloch C.A."/>
            <person name="Perna N.T."/>
            <person name="Burland V."/>
            <person name="Riley M."/>
            <person name="Collado-Vides J."/>
            <person name="Glasner J.D."/>
            <person name="Rode C.K."/>
            <person name="Mayhew G.F."/>
            <person name="Gregor J."/>
            <person name="Davis N.W."/>
            <person name="Kirkpatrick H.A."/>
            <person name="Goeden M.A."/>
            <person name="Rose D.J."/>
            <person name="Mau B."/>
            <person name="Shao Y."/>
        </authorList>
    </citation>
    <scope>NUCLEOTIDE SEQUENCE [LARGE SCALE GENOMIC DNA]</scope>
    <source>
        <strain>K12 / MG1655 / ATCC 47076</strain>
    </source>
</reference>
<reference key="3">
    <citation type="journal article" date="2006" name="Mol. Syst. Biol.">
        <title>Highly accurate genome sequences of Escherichia coli K-12 strains MG1655 and W3110.</title>
        <authorList>
            <person name="Hayashi K."/>
            <person name="Morooka N."/>
            <person name="Yamamoto Y."/>
            <person name="Fujita K."/>
            <person name="Isono K."/>
            <person name="Choi S."/>
            <person name="Ohtsubo E."/>
            <person name="Baba T."/>
            <person name="Wanner B.L."/>
            <person name="Mori H."/>
            <person name="Horiuchi T."/>
        </authorList>
    </citation>
    <scope>NUCLEOTIDE SEQUENCE [LARGE SCALE GENOMIC DNA]</scope>
    <source>
        <strain>K12 / W3110 / ATCC 27325 / DSM 5911</strain>
    </source>
</reference>
<reference key="4">
    <citation type="journal article" date="2004" name="J. Bacteriol.">
        <title>Identification of a phosphotransferase system of Escherichia coli required for growth on N-acetylmuramic acid.</title>
        <authorList>
            <person name="Dahl U."/>
            <person name="Jaeger T."/>
            <person name="Nguyen B.T."/>
            <person name="Sattler J.M."/>
            <person name="Mayer C."/>
        </authorList>
    </citation>
    <scope>FUNCTION IN MURNAC UPTAKE</scope>
    <scope>CATALYTIC ACTIVITY</scope>
</reference>
<reference key="5">
    <citation type="journal article" date="2005" name="Science">
        <title>Global topology analysis of the Escherichia coli inner membrane proteome.</title>
        <authorList>
            <person name="Daley D.O."/>
            <person name="Rapp M."/>
            <person name="Granseth E."/>
            <person name="Melen K."/>
            <person name="Drew D."/>
            <person name="von Heijne G."/>
        </authorList>
    </citation>
    <scope>TOPOLOGY [LARGE SCALE ANALYSIS]</scope>
    <source>
        <strain>K12 / MG1655 / ATCC 47076</strain>
    </source>
</reference>
<reference key="6">
    <citation type="journal article" date="2006" name="J. Bacteriol.">
        <title>MurQ etherase is required by Escherichia coli in order to metabolize anhydro-N-acetylmuramic acid obtained either from the environment or from its own cell wall.</title>
        <authorList>
            <person name="Uehara T."/>
            <person name="Suefuji K."/>
            <person name="Jaeger T."/>
            <person name="Mayer C."/>
            <person name="Park J.T."/>
        </authorList>
    </citation>
    <scope>FUNCTION IN ANHMURNAC UPTAKE</scope>
</reference>
<reference key="7">
    <citation type="journal article" date="2008" name="J. Bacteriol.">
        <title>The transcriptional factors MurR and catabolite activator protein regulate N-acetylmuramic acid catabolism in Escherichia coli.</title>
        <authorList>
            <person name="Jaeger T."/>
            <person name="Mayer C."/>
        </authorList>
    </citation>
    <scope>INDUCTION</scope>
    <source>
        <strain>K12 / MG1655 / ATCC 47076</strain>
    </source>
</reference>
<name>PTYBC_ECOLI</name>
<evidence type="ECO:0000255" key="1"/>
<evidence type="ECO:0000255" key="2">
    <source>
        <dbReference type="PROSITE-ProRule" id="PRU00421"/>
    </source>
</evidence>
<evidence type="ECO:0000255" key="3">
    <source>
        <dbReference type="PROSITE-ProRule" id="PRU00426"/>
    </source>
</evidence>
<evidence type="ECO:0000269" key="4">
    <source>
    </source>
</evidence>
<evidence type="ECO:0000269" key="5">
    <source>
    </source>
</evidence>
<evidence type="ECO:0000269" key="6">
    <source>
    </source>
</evidence>
<evidence type="ECO:0000303" key="7">
    <source>
    </source>
</evidence>
<gene>
    <name type="primary">murP</name>
    <name type="synonym">yfeV</name>
    <name type="ordered locus">b2429</name>
    <name type="ordered locus">JW2422</name>
</gene>